<gene>
    <name evidence="1" type="primary">rplU</name>
    <name type="ordered locus">AHA_0930</name>
</gene>
<evidence type="ECO:0000255" key="1">
    <source>
        <dbReference type="HAMAP-Rule" id="MF_01363"/>
    </source>
</evidence>
<evidence type="ECO:0000305" key="2"/>
<keyword id="KW-1185">Reference proteome</keyword>
<keyword id="KW-0687">Ribonucleoprotein</keyword>
<keyword id="KW-0689">Ribosomal protein</keyword>
<keyword id="KW-0694">RNA-binding</keyword>
<keyword id="KW-0699">rRNA-binding</keyword>
<name>RL21_AERHH</name>
<comment type="function">
    <text evidence="1">This protein binds to 23S rRNA in the presence of protein L20.</text>
</comment>
<comment type="subunit">
    <text evidence="1">Part of the 50S ribosomal subunit. Contacts protein L20.</text>
</comment>
<comment type="similarity">
    <text evidence="1">Belongs to the bacterial ribosomal protein bL21 family.</text>
</comment>
<organism>
    <name type="scientific">Aeromonas hydrophila subsp. hydrophila (strain ATCC 7966 / DSM 30187 / BCRC 13018 / CCUG 14551 / JCM 1027 / KCTC 2358 / NCIMB 9240 / NCTC 8049)</name>
    <dbReference type="NCBI Taxonomy" id="380703"/>
    <lineage>
        <taxon>Bacteria</taxon>
        <taxon>Pseudomonadati</taxon>
        <taxon>Pseudomonadota</taxon>
        <taxon>Gammaproteobacteria</taxon>
        <taxon>Aeromonadales</taxon>
        <taxon>Aeromonadaceae</taxon>
        <taxon>Aeromonas</taxon>
    </lineage>
</organism>
<sequence>MYAVFQSGGKQHRVAEGQIVRLEKLNVETGATIDFNEVLMVAAGDTFKVGAPFVEGGKVVAEVVAHGRGEKVTIVKFRRRKHHRKQAGHRQWFTEVKITGISA</sequence>
<proteinExistence type="inferred from homology"/>
<protein>
    <recommendedName>
        <fullName evidence="1">Large ribosomal subunit protein bL21</fullName>
    </recommendedName>
    <alternativeName>
        <fullName evidence="2">50S ribosomal protein L21</fullName>
    </alternativeName>
</protein>
<feature type="chain" id="PRO_1000067795" description="Large ribosomal subunit protein bL21">
    <location>
        <begin position="1"/>
        <end position="103"/>
    </location>
</feature>
<reference key="1">
    <citation type="journal article" date="2006" name="J. Bacteriol.">
        <title>Genome sequence of Aeromonas hydrophila ATCC 7966T: jack of all trades.</title>
        <authorList>
            <person name="Seshadri R."/>
            <person name="Joseph S.W."/>
            <person name="Chopra A.K."/>
            <person name="Sha J."/>
            <person name="Shaw J."/>
            <person name="Graf J."/>
            <person name="Haft D.H."/>
            <person name="Wu M."/>
            <person name="Ren Q."/>
            <person name="Rosovitz M.J."/>
            <person name="Madupu R."/>
            <person name="Tallon L."/>
            <person name="Kim M."/>
            <person name="Jin S."/>
            <person name="Vuong H."/>
            <person name="Stine O.C."/>
            <person name="Ali A."/>
            <person name="Horneman A.J."/>
            <person name="Heidelberg J.F."/>
        </authorList>
    </citation>
    <scope>NUCLEOTIDE SEQUENCE [LARGE SCALE GENOMIC DNA]</scope>
    <source>
        <strain>ATCC 7966 / DSM 30187 / BCRC 13018 / CCUG 14551 / JCM 1027 / KCTC 2358 / NCIMB 9240 / NCTC 8049</strain>
    </source>
</reference>
<accession>A0KGS7</accession>
<dbReference type="EMBL" id="CP000462">
    <property type="protein sequence ID" value="ABK36718.1"/>
    <property type="molecule type" value="Genomic_DNA"/>
</dbReference>
<dbReference type="RefSeq" id="WP_005304210.1">
    <property type="nucleotide sequence ID" value="NC_008570.1"/>
</dbReference>
<dbReference type="RefSeq" id="YP_855473.1">
    <property type="nucleotide sequence ID" value="NC_008570.1"/>
</dbReference>
<dbReference type="SMR" id="A0KGS7"/>
<dbReference type="STRING" id="380703.AHA_0930"/>
<dbReference type="EnsemblBacteria" id="ABK36718">
    <property type="protein sequence ID" value="ABK36718"/>
    <property type="gene ID" value="AHA_0930"/>
</dbReference>
<dbReference type="GeneID" id="97859417"/>
<dbReference type="KEGG" id="aha:AHA_0930"/>
<dbReference type="PATRIC" id="fig|380703.7.peg.930"/>
<dbReference type="eggNOG" id="COG0261">
    <property type="taxonomic scope" value="Bacteria"/>
</dbReference>
<dbReference type="HOGENOM" id="CLU_061463_3_3_6"/>
<dbReference type="OrthoDB" id="9813334at2"/>
<dbReference type="Proteomes" id="UP000000756">
    <property type="component" value="Chromosome"/>
</dbReference>
<dbReference type="GO" id="GO:0005737">
    <property type="term" value="C:cytoplasm"/>
    <property type="evidence" value="ECO:0007669"/>
    <property type="project" value="UniProtKB-ARBA"/>
</dbReference>
<dbReference type="GO" id="GO:1990904">
    <property type="term" value="C:ribonucleoprotein complex"/>
    <property type="evidence" value="ECO:0007669"/>
    <property type="project" value="UniProtKB-KW"/>
</dbReference>
<dbReference type="GO" id="GO:0005840">
    <property type="term" value="C:ribosome"/>
    <property type="evidence" value="ECO:0007669"/>
    <property type="project" value="UniProtKB-KW"/>
</dbReference>
<dbReference type="GO" id="GO:0019843">
    <property type="term" value="F:rRNA binding"/>
    <property type="evidence" value="ECO:0007669"/>
    <property type="project" value="UniProtKB-UniRule"/>
</dbReference>
<dbReference type="GO" id="GO:0003735">
    <property type="term" value="F:structural constituent of ribosome"/>
    <property type="evidence" value="ECO:0007669"/>
    <property type="project" value="InterPro"/>
</dbReference>
<dbReference type="GO" id="GO:0006412">
    <property type="term" value="P:translation"/>
    <property type="evidence" value="ECO:0007669"/>
    <property type="project" value="UniProtKB-UniRule"/>
</dbReference>
<dbReference type="HAMAP" id="MF_01363">
    <property type="entry name" value="Ribosomal_bL21"/>
    <property type="match status" value="1"/>
</dbReference>
<dbReference type="InterPro" id="IPR028909">
    <property type="entry name" value="bL21-like"/>
</dbReference>
<dbReference type="InterPro" id="IPR036164">
    <property type="entry name" value="bL21-like_sf"/>
</dbReference>
<dbReference type="InterPro" id="IPR001787">
    <property type="entry name" value="Ribosomal_bL21"/>
</dbReference>
<dbReference type="InterPro" id="IPR018258">
    <property type="entry name" value="Ribosomal_bL21_CS"/>
</dbReference>
<dbReference type="NCBIfam" id="TIGR00061">
    <property type="entry name" value="L21"/>
    <property type="match status" value="1"/>
</dbReference>
<dbReference type="PANTHER" id="PTHR21349">
    <property type="entry name" value="50S RIBOSOMAL PROTEIN L21"/>
    <property type="match status" value="1"/>
</dbReference>
<dbReference type="PANTHER" id="PTHR21349:SF0">
    <property type="entry name" value="LARGE RIBOSOMAL SUBUNIT PROTEIN BL21M"/>
    <property type="match status" value="1"/>
</dbReference>
<dbReference type="Pfam" id="PF00829">
    <property type="entry name" value="Ribosomal_L21p"/>
    <property type="match status" value="1"/>
</dbReference>
<dbReference type="SUPFAM" id="SSF141091">
    <property type="entry name" value="L21p-like"/>
    <property type="match status" value="1"/>
</dbReference>
<dbReference type="PROSITE" id="PS01169">
    <property type="entry name" value="RIBOSOMAL_L21"/>
    <property type="match status" value="1"/>
</dbReference>